<proteinExistence type="evidence at transcript level"/>
<organism>
    <name type="scientific">Onchocerca volvulus</name>
    <dbReference type="NCBI Taxonomy" id="6282"/>
    <lineage>
        <taxon>Eukaryota</taxon>
        <taxon>Metazoa</taxon>
        <taxon>Ecdysozoa</taxon>
        <taxon>Nematoda</taxon>
        <taxon>Chromadorea</taxon>
        <taxon>Rhabditida</taxon>
        <taxon>Spirurina</taxon>
        <taxon>Spiruromorpha</taxon>
        <taxon>Filarioidea</taxon>
        <taxon>Onchocercidae</taxon>
        <taxon>Onchocerca</taxon>
    </lineage>
</organism>
<name>ACHX_ONCVO</name>
<sequence>IIDVHEIDQIMTCSVWLKQVWIDKKLSWNPEIYGGVSVLYVPYEMVWVPDIVLYNTVDSNYNITISTKATLRYDGQVTWDSPAIFKTLCQIDVRWFPFDEQNCHFKFGSWTYTEDLLNLELLDSDARYELEMNENGELNNITIFEEGIDLSDYYPSVEWDIMSRIAKRRTKNYLTSFSDEAFIDIIFYLELRRKPLFYTVNLVFPCVGISFLTIVAFYLPPRSGEKVTLCILILVALTVFYLLLKDIIPATSIALPLFGKYLLFTMIMVSLSVLVTVISLNLHFRRPSTHRMPIWVKWLFLRILPKILFMRRPTLIKVDEAVRRVADYRRGYNMIINRYEQKVNCDSCRNVNKRITQEIQKIYRSPHVIKAFENVCFIAQLLKKKDREAMIDEDWKFVARVLDRLFLLLFSIACFLGTILILFQAPSLYDTRQAIN</sequence>
<feature type="chain" id="PRO_0000076982" description="Acetylcholine receptor non-alpha chain">
    <location>
        <begin position="1" status="less than"/>
        <end position="436"/>
    </location>
</feature>
<feature type="topological domain" description="Extracellular" evidence="2">
    <location>
        <begin position="1" status="less than"/>
        <end position="195"/>
    </location>
</feature>
<feature type="transmembrane region" description="Helical" evidence="2">
    <location>
        <begin position="196"/>
        <end position="219"/>
    </location>
</feature>
<feature type="transmembrane region" description="Helical" evidence="2">
    <location>
        <begin position="227"/>
        <end position="245"/>
    </location>
</feature>
<feature type="transmembrane region" description="Helical" evidence="2">
    <location>
        <begin position="261"/>
        <end position="280"/>
    </location>
</feature>
<feature type="topological domain" description="Cytoplasmic" evidence="2">
    <location>
        <begin position="281"/>
        <end position="404"/>
    </location>
</feature>
<feature type="transmembrane region" description="Helical" evidence="2">
    <location>
        <begin position="405"/>
        <end position="423"/>
    </location>
</feature>
<feature type="glycosylation site" description="N-linked (GlcNAc...) asparagine" evidence="2">
    <location>
        <position position="62"/>
    </location>
</feature>
<feature type="glycosylation site" description="N-linked (GlcNAc...) asparagine" evidence="2">
    <location>
        <position position="140"/>
    </location>
</feature>
<feature type="disulfide bond" evidence="1">
    <location>
        <begin position="89"/>
        <end position="103"/>
    </location>
</feature>
<feature type="non-terminal residue">
    <location>
        <position position="1"/>
    </location>
</feature>
<keyword id="KW-1003">Cell membrane</keyword>
<keyword id="KW-1015">Disulfide bond</keyword>
<keyword id="KW-0325">Glycoprotein</keyword>
<keyword id="KW-0407">Ion channel</keyword>
<keyword id="KW-0406">Ion transport</keyword>
<keyword id="KW-1071">Ligand-gated ion channel</keyword>
<keyword id="KW-0472">Membrane</keyword>
<keyword id="KW-0628">Postsynaptic cell membrane</keyword>
<keyword id="KW-0675">Receptor</keyword>
<keyword id="KW-1185">Reference proteome</keyword>
<keyword id="KW-0770">Synapse</keyword>
<keyword id="KW-0812">Transmembrane</keyword>
<keyword id="KW-1133">Transmembrane helix</keyword>
<keyword id="KW-0813">Transport</keyword>
<evidence type="ECO:0000250" key="1"/>
<evidence type="ECO:0000255" key="2"/>
<evidence type="ECO:0000305" key="3"/>
<protein>
    <recommendedName>
        <fullName>Acetylcholine receptor non-alpha chain</fullName>
    </recommendedName>
</protein>
<comment type="function">
    <text>After binding acetylcholine, the AChR responds by an extensive change in conformation that affects all subunits and leads to opening of an ion-conducting channel across the plasma membrane.</text>
</comment>
<comment type="subcellular location">
    <subcellularLocation>
        <location>Postsynaptic cell membrane</location>
        <topology>Multi-pass membrane protein</topology>
    </subcellularLocation>
    <subcellularLocation>
        <location>Cell membrane</location>
        <topology>Multi-pass membrane protein</topology>
    </subcellularLocation>
</comment>
<comment type="similarity">
    <text evidence="3">Belongs to the ligand-gated ion channel (TC 1.A.9) family. Acetylcholine receptor (TC 1.A.9.1) subfamily.</text>
</comment>
<accession>P54247</accession>
<dbReference type="EMBL" id="L20465">
    <property type="protein sequence ID" value="AAA21823.1"/>
    <property type="molecule type" value="mRNA"/>
</dbReference>
<dbReference type="EMBL" id="L12543">
    <property type="protein sequence ID" value="AAA29415.1"/>
    <property type="molecule type" value="mRNA"/>
</dbReference>
<dbReference type="SMR" id="P54247"/>
<dbReference type="STRING" id="6282.P54247"/>
<dbReference type="HOGENOM" id="CLU_018074_1_0_1"/>
<dbReference type="Proteomes" id="UP000024404">
    <property type="component" value="Unassembled WGS sequence"/>
</dbReference>
<dbReference type="GO" id="GO:0045211">
    <property type="term" value="C:postsynaptic membrane"/>
    <property type="evidence" value="ECO:0007669"/>
    <property type="project" value="UniProtKB-SubCell"/>
</dbReference>
<dbReference type="GO" id="GO:0022848">
    <property type="term" value="F:acetylcholine-gated monoatomic cation-selective channel activity"/>
    <property type="evidence" value="ECO:0007669"/>
    <property type="project" value="InterPro"/>
</dbReference>
<dbReference type="GO" id="GO:0004888">
    <property type="term" value="F:transmembrane signaling receptor activity"/>
    <property type="evidence" value="ECO:0007669"/>
    <property type="project" value="InterPro"/>
</dbReference>
<dbReference type="CDD" id="cd19064">
    <property type="entry name" value="LGIC_TM_nAChR"/>
    <property type="match status" value="1"/>
</dbReference>
<dbReference type="FunFam" id="2.70.170.10:FF:000044">
    <property type="entry name" value="AcetylCholine Receptor"/>
    <property type="match status" value="1"/>
</dbReference>
<dbReference type="FunFam" id="1.20.58.390:FF:000030">
    <property type="entry name" value="Acetylcholine receptor subunit alpha-L1"/>
    <property type="match status" value="1"/>
</dbReference>
<dbReference type="FunFam" id="1.20.58.390:FF:000001">
    <property type="entry name" value="Neuronal nicotinic acetylcholine receptor subunit 3"/>
    <property type="match status" value="1"/>
</dbReference>
<dbReference type="Gene3D" id="2.70.170.10">
    <property type="entry name" value="Neurotransmitter-gated ion-channel ligand-binding domain"/>
    <property type="match status" value="1"/>
</dbReference>
<dbReference type="Gene3D" id="1.20.58.390">
    <property type="entry name" value="Neurotransmitter-gated ion-channel transmembrane domain"/>
    <property type="match status" value="2"/>
</dbReference>
<dbReference type="InterPro" id="IPR006202">
    <property type="entry name" value="Neur_chan_lig-bd"/>
</dbReference>
<dbReference type="InterPro" id="IPR036734">
    <property type="entry name" value="Neur_chan_lig-bd_sf"/>
</dbReference>
<dbReference type="InterPro" id="IPR006201">
    <property type="entry name" value="Neur_channel"/>
</dbReference>
<dbReference type="InterPro" id="IPR036719">
    <property type="entry name" value="Neuro-gated_channel_TM_sf"/>
</dbReference>
<dbReference type="InterPro" id="IPR038050">
    <property type="entry name" value="Neuro_actylchol_rec"/>
</dbReference>
<dbReference type="InterPro" id="IPR006029">
    <property type="entry name" value="Neurotrans-gated_channel_TM"/>
</dbReference>
<dbReference type="InterPro" id="IPR018000">
    <property type="entry name" value="Neurotransmitter_ion_chnl_CS"/>
</dbReference>
<dbReference type="InterPro" id="IPR002394">
    <property type="entry name" value="Nicotinic_acetylcholine_rcpt"/>
</dbReference>
<dbReference type="PANTHER" id="PTHR18945">
    <property type="entry name" value="NEUROTRANSMITTER GATED ION CHANNEL"/>
    <property type="match status" value="1"/>
</dbReference>
<dbReference type="Pfam" id="PF02931">
    <property type="entry name" value="Neur_chan_LBD"/>
    <property type="match status" value="1"/>
</dbReference>
<dbReference type="Pfam" id="PF02932">
    <property type="entry name" value="Neur_chan_memb"/>
    <property type="match status" value="1"/>
</dbReference>
<dbReference type="PRINTS" id="PR00254">
    <property type="entry name" value="NICOTINICR"/>
</dbReference>
<dbReference type="PRINTS" id="PR00252">
    <property type="entry name" value="NRIONCHANNEL"/>
</dbReference>
<dbReference type="SUPFAM" id="SSF90112">
    <property type="entry name" value="Neurotransmitter-gated ion-channel transmembrane pore"/>
    <property type="match status" value="1"/>
</dbReference>
<dbReference type="SUPFAM" id="SSF63712">
    <property type="entry name" value="Nicotinic receptor ligand binding domain-like"/>
    <property type="match status" value="1"/>
</dbReference>
<dbReference type="PROSITE" id="PS00236">
    <property type="entry name" value="NEUROTR_ION_CHANNEL"/>
    <property type="match status" value="1"/>
</dbReference>
<reference key="1">
    <citation type="journal article" date="1994" name="Gene">
        <title>Cloning of a cDNA encoding a putative nicotinic acetylcholine receptor subunit of the human filarial parasite Onchocerca volvulus.</title>
        <authorList>
            <person name="Ajuh P.M."/>
            <person name="Egwang T.G."/>
        </authorList>
    </citation>
    <scope>NUCLEOTIDE SEQUENCE [MRNA]</scope>
</reference>